<organism>
    <name type="scientific">Saccharolobus islandicus (strain Y.N.15.51 / Yellowstone #2)</name>
    <name type="common">Sulfolobus islandicus</name>
    <dbReference type="NCBI Taxonomy" id="419942"/>
    <lineage>
        <taxon>Archaea</taxon>
        <taxon>Thermoproteota</taxon>
        <taxon>Thermoprotei</taxon>
        <taxon>Sulfolobales</taxon>
        <taxon>Sulfolobaceae</taxon>
        <taxon>Saccharolobus</taxon>
    </lineage>
</organism>
<name>OGG1_SACI1</name>
<evidence type="ECO:0000255" key="1">
    <source>
        <dbReference type="HAMAP-Rule" id="MF_00241"/>
    </source>
</evidence>
<feature type="chain" id="PRO_1000204473" description="8-oxoguanine DNA glycosylase/AP lyase">
    <location>
        <begin position="1"/>
        <end position="207"/>
    </location>
</feature>
<feature type="active site" evidence="1">
    <location>
        <position position="128"/>
    </location>
</feature>
<feature type="active site" evidence="1">
    <location>
        <position position="146"/>
    </location>
</feature>
<feature type="site" description="Important for guanine/8-oxoguanine distinction" evidence="1">
    <location>
        <position position="207"/>
    </location>
</feature>
<gene>
    <name evidence="1" type="primary">ogg</name>
    <name type="ordered locus">YN1551_1546</name>
</gene>
<comment type="function">
    <text evidence="1">Catalyzes the excision of an oxidatively damaged form of guanine (7,8-dihydro-8-oxoguanine = 8-oxoG) from DNA. Also cleaves the DNA backbone at apurinic/apyrimidinic sites (AP sites).</text>
</comment>
<comment type="catalytic activity">
    <reaction evidence="1">
        <text>2'-deoxyribonucleotide-(2'-deoxyribose 5'-phosphate)-2'-deoxyribonucleotide-DNA = a 3'-end 2'-deoxyribonucleotide-(2,3-dehydro-2,3-deoxyribose 5'-phosphate)-DNA + a 5'-end 5'-phospho-2'-deoxyribonucleoside-DNA + H(+)</text>
        <dbReference type="Rhea" id="RHEA:66592"/>
        <dbReference type="Rhea" id="RHEA-COMP:13180"/>
        <dbReference type="Rhea" id="RHEA-COMP:16897"/>
        <dbReference type="Rhea" id="RHEA-COMP:17067"/>
        <dbReference type="ChEBI" id="CHEBI:15378"/>
        <dbReference type="ChEBI" id="CHEBI:136412"/>
        <dbReference type="ChEBI" id="CHEBI:157695"/>
        <dbReference type="ChEBI" id="CHEBI:167181"/>
        <dbReference type="EC" id="4.2.99.18"/>
    </reaction>
</comment>
<comment type="similarity">
    <text evidence="1">Belongs to the type-2 OGG1 family.</text>
</comment>
<accession>C3NHM4</accession>
<protein>
    <recommendedName>
        <fullName evidence="1">8-oxoguanine DNA glycosylase/AP lyase</fullName>
    </recommendedName>
    <domain>
        <recommendedName>
            <fullName evidence="1">8-oxoguanine DNA glycosylase</fullName>
            <shortName evidence="1">8-oxoG DNA glycosylase</shortName>
            <ecNumber evidence="1">3.2.2.-</ecNumber>
        </recommendedName>
    </domain>
    <domain>
        <recommendedName>
            <fullName evidence="1">DNA-(apurinic or apyrimidinic site) lyase</fullName>
            <shortName evidence="1">AP lyase</shortName>
            <ecNumber evidence="1">4.2.99.18</ecNumber>
        </recommendedName>
    </domain>
</protein>
<reference key="1">
    <citation type="journal article" date="2009" name="Proc. Natl. Acad. Sci. U.S.A.">
        <title>Biogeography of the Sulfolobus islandicus pan-genome.</title>
        <authorList>
            <person name="Reno M.L."/>
            <person name="Held N.L."/>
            <person name="Fields C.J."/>
            <person name="Burke P.V."/>
            <person name="Whitaker R.J."/>
        </authorList>
    </citation>
    <scope>NUCLEOTIDE SEQUENCE [LARGE SCALE GENOMIC DNA]</scope>
    <source>
        <strain>Y.N.15.51 / Yellowstone #2</strain>
    </source>
</reference>
<dbReference type="EC" id="3.2.2.-" evidence="1"/>
<dbReference type="EC" id="4.2.99.18" evidence="1"/>
<dbReference type="EMBL" id="CP001404">
    <property type="protein sequence ID" value="ACP48634.1"/>
    <property type="molecule type" value="Genomic_DNA"/>
</dbReference>
<dbReference type="RefSeq" id="WP_012717491.1">
    <property type="nucleotide sequence ID" value="NC_012623.1"/>
</dbReference>
<dbReference type="SMR" id="C3NHM4"/>
<dbReference type="GeneID" id="7809137"/>
<dbReference type="KEGG" id="sin:YN1551_1546"/>
<dbReference type="HOGENOM" id="CLU_104937_0_0_2"/>
<dbReference type="Proteomes" id="UP000006818">
    <property type="component" value="Chromosome"/>
</dbReference>
<dbReference type="GO" id="GO:0140078">
    <property type="term" value="F:class I DNA-(apurinic or apyrimidinic site) endonuclease activity"/>
    <property type="evidence" value="ECO:0007669"/>
    <property type="project" value="UniProtKB-EC"/>
</dbReference>
<dbReference type="GO" id="GO:0016799">
    <property type="term" value="F:hydrolase activity, hydrolyzing N-glycosyl compounds"/>
    <property type="evidence" value="ECO:0007669"/>
    <property type="project" value="UniProtKB-UniRule"/>
</dbReference>
<dbReference type="GO" id="GO:0006284">
    <property type="term" value="P:base-excision repair"/>
    <property type="evidence" value="ECO:0007669"/>
    <property type="project" value="UniProtKB-UniRule"/>
</dbReference>
<dbReference type="CDD" id="cd00056">
    <property type="entry name" value="ENDO3c"/>
    <property type="match status" value="1"/>
</dbReference>
<dbReference type="Gene3D" id="1.10.1670.10">
    <property type="entry name" value="Helix-hairpin-Helix base-excision DNA repair enzymes (C-terminal)"/>
    <property type="match status" value="1"/>
</dbReference>
<dbReference type="Gene3D" id="1.10.340.30">
    <property type="entry name" value="Hypothetical protein, domain 2"/>
    <property type="match status" value="1"/>
</dbReference>
<dbReference type="HAMAP" id="MF_00241">
    <property type="entry name" value="Ogg"/>
    <property type="match status" value="1"/>
</dbReference>
<dbReference type="InterPro" id="IPR012092">
    <property type="entry name" value="DNA_glyclase/AP_lyase_Ogg"/>
</dbReference>
<dbReference type="InterPro" id="IPR011257">
    <property type="entry name" value="DNA_glycosylase"/>
</dbReference>
<dbReference type="InterPro" id="IPR003265">
    <property type="entry name" value="HhH-GPD_domain"/>
</dbReference>
<dbReference type="InterPro" id="IPR023170">
    <property type="entry name" value="HhH_base_excis_C"/>
</dbReference>
<dbReference type="NCBIfam" id="NF002305">
    <property type="entry name" value="PRK01229.1"/>
    <property type="match status" value="1"/>
</dbReference>
<dbReference type="Pfam" id="PF22175">
    <property type="entry name" value="Ogg-HhH"/>
    <property type="match status" value="1"/>
</dbReference>
<dbReference type="PIRSF" id="PIRSF005954">
    <property type="entry name" value="Thrmst_ogg"/>
    <property type="match status" value="1"/>
</dbReference>
<dbReference type="SMART" id="SM00478">
    <property type="entry name" value="ENDO3c"/>
    <property type="match status" value="1"/>
</dbReference>
<dbReference type="SUPFAM" id="SSF48150">
    <property type="entry name" value="DNA-glycosylase"/>
    <property type="match status" value="1"/>
</dbReference>
<proteinExistence type="inferred from homology"/>
<sequence length="207" mass="24083">MLRSLVQNPRVRARVLERVDEFRLNNLSNEEVWFRELTLCLLTANSSFISAYQALNCLGDKIYYANEEVIRSILKSCKYRFYNLKAKYIIMAREKVYGKLKEEITPLADSDQQLAREKLLNIKGIGMKEASHFLRNVGYFDLAIIDRHLIDFMRRIGAIGEINVKHLSKSRYISLESVLKSIALNLNISVGILDLFIWYKETNTIVK</sequence>
<keyword id="KW-0227">DNA damage</keyword>
<keyword id="KW-0234">DNA repair</keyword>
<keyword id="KW-0326">Glycosidase</keyword>
<keyword id="KW-0378">Hydrolase</keyword>
<keyword id="KW-0456">Lyase</keyword>
<keyword id="KW-0511">Multifunctional enzyme</keyword>